<name>DXR_CHLPN</name>
<reference key="1">
    <citation type="journal article" date="1999" name="Nat. Genet.">
        <title>Comparative genomes of Chlamydia pneumoniae and C. trachomatis.</title>
        <authorList>
            <person name="Kalman S."/>
            <person name="Mitchell W.P."/>
            <person name="Marathe R."/>
            <person name="Lammel C.J."/>
            <person name="Fan J."/>
            <person name="Hyman R.W."/>
            <person name="Olinger L."/>
            <person name="Grimwood J."/>
            <person name="Davis R.W."/>
            <person name="Stephens R.S."/>
        </authorList>
    </citation>
    <scope>NUCLEOTIDE SEQUENCE [LARGE SCALE GENOMIC DNA]</scope>
    <source>
        <strain>CWL029</strain>
    </source>
</reference>
<reference key="2">
    <citation type="journal article" date="2000" name="Nucleic Acids Res.">
        <title>Genome sequences of Chlamydia trachomatis MoPn and Chlamydia pneumoniae AR39.</title>
        <authorList>
            <person name="Read T.D."/>
            <person name="Brunham R.C."/>
            <person name="Shen C."/>
            <person name="Gill S.R."/>
            <person name="Heidelberg J.F."/>
            <person name="White O."/>
            <person name="Hickey E.K."/>
            <person name="Peterson J.D."/>
            <person name="Utterback T.R."/>
            <person name="Berry K.J."/>
            <person name="Bass S."/>
            <person name="Linher K.D."/>
            <person name="Weidman J.F."/>
            <person name="Khouri H.M."/>
            <person name="Craven B."/>
            <person name="Bowman C."/>
            <person name="Dodson R.J."/>
            <person name="Gwinn M.L."/>
            <person name="Nelson W.C."/>
            <person name="DeBoy R.T."/>
            <person name="Kolonay J.F."/>
            <person name="McClarty G."/>
            <person name="Salzberg S.L."/>
            <person name="Eisen J.A."/>
            <person name="Fraser C.M."/>
        </authorList>
    </citation>
    <scope>NUCLEOTIDE SEQUENCE [LARGE SCALE GENOMIC DNA]</scope>
    <source>
        <strain>AR39</strain>
    </source>
</reference>
<reference key="3">
    <citation type="journal article" date="2000" name="Nucleic Acids Res.">
        <title>Comparison of whole genome sequences of Chlamydia pneumoniae J138 from Japan and CWL029 from USA.</title>
        <authorList>
            <person name="Shirai M."/>
            <person name="Hirakawa H."/>
            <person name="Kimoto M."/>
            <person name="Tabuchi M."/>
            <person name="Kishi F."/>
            <person name="Ouchi K."/>
            <person name="Shiba T."/>
            <person name="Ishii K."/>
            <person name="Hattori M."/>
            <person name="Kuhara S."/>
            <person name="Nakazawa T."/>
        </authorList>
    </citation>
    <scope>NUCLEOTIDE SEQUENCE [LARGE SCALE GENOMIC DNA]</scope>
    <source>
        <strain>J138</strain>
    </source>
</reference>
<reference key="4">
    <citation type="submission" date="2002-05" db="EMBL/GenBank/DDBJ databases">
        <title>The genome sequence of Chlamydia pneumoniae TW183 and comparison with other Chlamydia strains based on whole genome sequence analysis.</title>
        <authorList>
            <person name="Geng M.M."/>
            <person name="Schuhmacher A."/>
            <person name="Muehldorfer I."/>
            <person name="Bensch K.W."/>
            <person name="Schaefer K.P."/>
            <person name="Schneider S."/>
            <person name="Pohl T."/>
            <person name="Essig A."/>
            <person name="Marre R."/>
            <person name="Melchers K."/>
        </authorList>
    </citation>
    <scope>NUCLEOTIDE SEQUENCE [LARGE SCALE GENOMIC DNA]</scope>
    <source>
        <strain>TW-183</strain>
    </source>
</reference>
<sequence>MKHLAVLGSTGSIGRQTLEIVRRYPSEFKIISMASYGNNLRLFFQQLEEFAPLAAAVYNEEVYNEACQRFPHMQFFLGQEGLTQLCIMDTVTTVVAASSGIEALPAILESMKKGKALALANKEILVCAGELVSKTAKENGIKVLPIDSEHNALYQCLEGRTIEGIKKLILTASGGPLLNKSLEELSCVTKQDVLNHPIWNMGSKVTVDSSTLVNKGLEIIEAYWLFGLENVEILAVIHPQSLIHGMVEFLDGSVISIMNPPDMLFPIQYALTAPERFASPRDGMDFSKKQTLEFFPVDEERFPSIRLAQQVLEKQGSSGSFFNAANEVLVRRFLCEEISWCDILRKLTTLMECHKVYACHSLEDILEVDGEARALAQEI</sequence>
<proteinExistence type="inferred from homology"/>
<organism>
    <name type="scientific">Chlamydia pneumoniae</name>
    <name type="common">Chlamydophila pneumoniae</name>
    <dbReference type="NCBI Taxonomy" id="83558"/>
    <lineage>
        <taxon>Bacteria</taxon>
        <taxon>Pseudomonadati</taxon>
        <taxon>Chlamydiota</taxon>
        <taxon>Chlamydiia</taxon>
        <taxon>Chlamydiales</taxon>
        <taxon>Chlamydiaceae</taxon>
        <taxon>Chlamydia/Chlamydophila group</taxon>
        <taxon>Chlamydia</taxon>
    </lineage>
</organism>
<feature type="chain" id="PRO_0000163630" description="1-deoxy-D-xylulose 5-phosphate reductoisomerase">
    <location>
        <begin position="1"/>
        <end position="379"/>
    </location>
</feature>
<feature type="binding site" evidence="1">
    <location>
        <position position="10"/>
    </location>
    <ligand>
        <name>NADPH</name>
        <dbReference type="ChEBI" id="CHEBI:57783"/>
    </ligand>
</feature>
<feature type="binding site" evidence="1">
    <location>
        <position position="11"/>
    </location>
    <ligand>
        <name>NADPH</name>
        <dbReference type="ChEBI" id="CHEBI:57783"/>
    </ligand>
</feature>
<feature type="binding site" evidence="1">
    <location>
        <position position="12"/>
    </location>
    <ligand>
        <name>NADPH</name>
        <dbReference type="ChEBI" id="CHEBI:57783"/>
    </ligand>
</feature>
<feature type="binding site" evidence="1">
    <location>
        <position position="13"/>
    </location>
    <ligand>
        <name>NADPH</name>
        <dbReference type="ChEBI" id="CHEBI:57783"/>
    </ligand>
</feature>
<feature type="binding site" evidence="1">
    <location>
        <position position="39"/>
    </location>
    <ligand>
        <name>NADPH</name>
        <dbReference type="ChEBI" id="CHEBI:57783"/>
    </ligand>
</feature>
<feature type="binding site" evidence="1">
    <location>
        <position position="121"/>
    </location>
    <ligand>
        <name>NADPH</name>
        <dbReference type="ChEBI" id="CHEBI:57783"/>
    </ligand>
</feature>
<feature type="binding site" evidence="1">
    <location>
        <position position="122"/>
    </location>
    <ligand>
        <name>1-deoxy-D-xylulose 5-phosphate</name>
        <dbReference type="ChEBI" id="CHEBI:57792"/>
    </ligand>
</feature>
<feature type="binding site" evidence="1">
    <location>
        <position position="123"/>
    </location>
    <ligand>
        <name>NADPH</name>
        <dbReference type="ChEBI" id="CHEBI:57783"/>
    </ligand>
</feature>
<feature type="binding site" evidence="1">
    <location>
        <position position="147"/>
    </location>
    <ligand>
        <name>Mn(2+)</name>
        <dbReference type="ChEBI" id="CHEBI:29035"/>
    </ligand>
</feature>
<feature type="binding site" evidence="1">
    <location>
        <position position="148"/>
    </location>
    <ligand>
        <name>1-deoxy-D-xylulose 5-phosphate</name>
        <dbReference type="ChEBI" id="CHEBI:57792"/>
    </ligand>
</feature>
<feature type="binding site" evidence="1">
    <location>
        <position position="149"/>
    </location>
    <ligand>
        <name>1-deoxy-D-xylulose 5-phosphate</name>
        <dbReference type="ChEBI" id="CHEBI:57792"/>
    </ligand>
</feature>
<feature type="binding site" evidence="1">
    <location>
        <position position="149"/>
    </location>
    <ligand>
        <name>Mn(2+)</name>
        <dbReference type="ChEBI" id="CHEBI:29035"/>
    </ligand>
</feature>
<feature type="binding site" evidence="1">
    <location>
        <position position="173"/>
    </location>
    <ligand>
        <name>1-deoxy-D-xylulose 5-phosphate</name>
        <dbReference type="ChEBI" id="CHEBI:57792"/>
    </ligand>
</feature>
<feature type="binding site" evidence="1">
    <location>
        <position position="196"/>
    </location>
    <ligand>
        <name>1-deoxy-D-xylulose 5-phosphate</name>
        <dbReference type="ChEBI" id="CHEBI:57792"/>
    </ligand>
</feature>
<feature type="binding site" evidence="1">
    <location>
        <position position="202"/>
    </location>
    <ligand>
        <name>NADPH</name>
        <dbReference type="ChEBI" id="CHEBI:57783"/>
    </ligand>
</feature>
<feature type="binding site" evidence="1">
    <location>
        <position position="209"/>
    </location>
    <ligand>
        <name>1-deoxy-D-xylulose 5-phosphate</name>
        <dbReference type="ChEBI" id="CHEBI:57792"/>
    </ligand>
</feature>
<feature type="binding site" evidence="1">
    <location>
        <position position="214"/>
    </location>
    <ligand>
        <name>1-deoxy-D-xylulose 5-phosphate</name>
        <dbReference type="ChEBI" id="CHEBI:57792"/>
    </ligand>
</feature>
<feature type="binding site" evidence="1">
    <location>
        <position position="215"/>
    </location>
    <ligand>
        <name>1-deoxy-D-xylulose 5-phosphate</name>
        <dbReference type="ChEBI" id="CHEBI:57792"/>
    </ligand>
</feature>
<feature type="binding site" evidence="1">
    <location>
        <position position="218"/>
    </location>
    <ligand>
        <name>1-deoxy-D-xylulose 5-phosphate</name>
        <dbReference type="ChEBI" id="CHEBI:57792"/>
    </ligand>
</feature>
<feature type="binding site" evidence="1">
    <location>
        <position position="218"/>
    </location>
    <ligand>
        <name>Mn(2+)</name>
        <dbReference type="ChEBI" id="CHEBI:29035"/>
    </ligand>
</feature>
<feature type="sequence conflict" description="In Ref. 3; BAA98553." evidence="2" ref="3">
    <original>Q</original>
    <variation>H</variation>
    <location>
        <position position="46"/>
    </location>
</feature>
<feature type="sequence conflict" description="In Ref. 4; AAP98283." evidence="2" ref="4">
    <original>V</original>
    <variation>I</variation>
    <location>
        <position position="231"/>
    </location>
</feature>
<accession>Q9Z8J8</accession>
<accession>Q9JSF9</accession>
<accession>Q9K276</accession>
<protein>
    <recommendedName>
        <fullName evidence="1">1-deoxy-D-xylulose 5-phosphate reductoisomerase</fullName>
        <shortName evidence="1">DXP reductoisomerase</shortName>
        <ecNumber evidence="1">1.1.1.267</ecNumber>
    </recommendedName>
    <alternativeName>
        <fullName evidence="1">1-deoxyxylulose-5-phosphate reductoisomerase</fullName>
    </alternativeName>
    <alternativeName>
        <fullName evidence="1">2-C-methyl-D-erythritol 4-phosphate synthase</fullName>
    </alternativeName>
</protein>
<keyword id="KW-0414">Isoprene biosynthesis</keyword>
<keyword id="KW-0464">Manganese</keyword>
<keyword id="KW-0479">Metal-binding</keyword>
<keyword id="KW-0521">NADP</keyword>
<keyword id="KW-0560">Oxidoreductase</keyword>
<gene>
    <name evidence="1" type="primary">dxr</name>
    <name type="ordered locus">CPn_0345</name>
    <name type="ordered locus">CP_0415</name>
    <name type="ordered locus">CpB0352</name>
</gene>
<evidence type="ECO:0000255" key="1">
    <source>
        <dbReference type="HAMAP-Rule" id="MF_00183"/>
    </source>
</evidence>
<evidence type="ECO:0000305" key="2"/>
<comment type="function">
    <text evidence="1">Catalyzes the NADPH-dependent rearrangement and reduction of 1-deoxy-D-xylulose-5-phosphate (DXP) to 2-C-methyl-D-erythritol 4-phosphate (MEP).</text>
</comment>
<comment type="catalytic activity">
    <reaction evidence="1">
        <text>2-C-methyl-D-erythritol 4-phosphate + NADP(+) = 1-deoxy-D-xylulose 5-phosphate + NADPH + H(+)</text>
        <dbReference type="Rhea" id="RHEA:13717"/>
        <dbReference type="ChEBI" id="CHEBI:15378"/>
        <dbReference type="ChEBI" id="CHEBI:57783"/>
        <dbReference type="ChEBI" id="CHEBI:57792"/>
        <dbReference type="ChEBI" id="CHEBI:58262"/>
        <dbReference type="ChEBI" id="CHEBI:58349"/>
        <dbReference type="EC" id="1.1.1.267"/>
    </reaction>
    <physiologicalReaction direction="right-to-left" evidence="1">
        <dbReference type="Rhea" id="RHEA:13719"/>
    </physiologicalReaction>
</comment>
<comment type="cofactor">
    <cofactor evidence="1">
        <name>Mg(2+)</name>
        <dbReference type="ChEBI" id="CHEBI:18420"/>
    </cofactor>
    <cofactor evidence="1">
        <name>Mn(2+)</name>
        <dbReference type="ChEBI" id="CHEBI:29035"/>
    </cofactor>
</comment>
<comment type="pathway">
    <text evidence="1">Isoprenoid biosynthesis; isopentenyl diphosphate biosynthesis via DXP pathway; isopentenyl diphosphate from 1-deoxy-D-xylulose 5-phosphate: step 1/6.</text>
</comment>
<comment type="similarity">
    <text evidence="1">Belongs to the DXR family.</text>
</comment>
<dbReference type="EC" id="1.1.1.267" evidence="1"/>
<dbReference type="EMBL" id="AE001363">
    <property type="protein sequence ID" value="AAD18489.1"/>
    <property type="molecule type" value="Genomic_DNA"/>
</dbReference>
<dbReference type="EMBL" id="AE002161">
    <property type="protein sequence ID" value="AAF38259.1"/>
    <property type="molecule type" value="Genomic_DNA"/>
</dbReference>
<dbReference type="EMBL" id="BA000008">
    <property type="protein sequence ID" value="BAA98553.1"/>
    <property type="molecule type" value="Genomic_DNA"/>
</dbReference>
<dbReference type="EMBL" id="AE009440">
    <property type="protein sequence ID" value="AAP98283.1"/>
    <property type="molecule type" value="Genomic_DNA"/>
</dbReference>
<dbReference type="PIR" id="B72091">
    <property type="entry name" value="B72091"/>
</dbReference>
<dbReference type="PIR" id="C81578">
    <property type="entry name" value="C81578"/>
</dbReference>
<dbReference type="PIR" id="G86533">
    <property type="entry name" value="G86533"/>
</dbReference>
<dbReference type="RefSeq" id="NP_224545.1">
    <property type="nucleotide sequence ID" value="NC_000922.1"/>
</dbReference>
<dbReference type="RefSeq" id="WP_010882988.1">
    <property type="nucleotide sequence ID" value="NZ_LN847257.1"/>
</dbReference>
<dbReference type="SMR" id="Q9Z8J8"/>
<dbReference type="STRING" id="406984.CPK_ORF00852"/>
<dbReference type="GeneID" id="45050390"/>
<dbReference type="KEGG" id="cpa:CP_0415"/>
<dbReference type="KEGG" id="cpj:yaeM"/>
<dbReference type="KEGG" id="cpn:CPn_0345"/>
<dbReference type="KEGG" id="cpt:CpB0352"/>
<dbReference type="PATRIC" id="fig|115713.3.peg.381"/>
<dbReference type="eggNOG" id="COG0743">
    <property type="taxonomic scope" value="Bacteria"/>
</dbReference>
<dbReference type="HOGENOM" id="CLU_035714_4_0_0"/>
<dbReference type="OrthoDB" id="9806546at2"/>
<dbReference type="UniPathway" id="UPA00056">
    <property type="reaction ID" value="UER00092"/>
</dbReference>
<dbReference type="Proteomes" id="UP000000583">
    <property type="component" value="Chromosome"/>
</dbReference>
<dbReference type="Proteomes" id="UP000000801">
    <property type="component" value="Chromosome"/>
</dbReference>
<dbReference type="GO" id="GO:0030604">
    <property type="term" value="F:1-deoxy-D-xylulose-5-phosphate reductoisomerase activity"/>
    <property type="evidence" value="ECO:0007669"/>
    <property type="project" value="UniProtKB-UniRule"/>
</dbReference>
<dbReference type="GO" id="GO:0030145">
    <property type="term" value="F:manganese ion binding"/>
    <property type="evidence" value="ECO:0007669"/>
    <property type="project" value="TreeGrafter"/>
</dbReference>
<dbReference type="GO" id="GO:0070402">
    <property type="term" value="F:NADPH binding"/>
    <property type="evidence" value="ECO:0007669"/>
    <property type="project" value="InterPro"/>
</dbReference>
<dbReference type="GO" id="GO:0051484">
    <property type="term" value="P:isopentenyl diphosphate biosynthetic process, methylerythritol 4-phosphate pathway involved in terpenoid biosynthetic process"/>
    <property type="evidence" value="ECO:0007669"/>
    <property type="project" value="TreeGrafter"/>
</dbReference>
<dbReference type="FunFam" id="3.40.50.720:FF:000045">
    <property type="entry name" value="1-deoxy-D-xylulose 5-phosphate reductoisomerase"/>
    <property type="match status" value="1"/>
</dbReference>
<dbReference type="Gene3D" id="1.10.1740.10">
    <property type="match status" value="1"/>
</dbReference>
<dbReference type="Gene3D" id="3.40.50.720">
    <property type="entry name" value="NAD(P)-binding Rossmann-like Domain"/>
    <property type="match status" value="1"/>
</dbReference>
<dbReference type="HAMAP" id="MF_00183">
    <property type="entry name" value="DXP_reductoisom"/>
    <property type="match status" value="1"/>
</dbReference>
<dbReference type="InterPro" id="IPR003821">
    <property type="entry name" value="DXP_reductoisomerase"/>
</dbReference>
<dbReference type="InterPro" id="IPR013644">
    <property type="entry name" value="DXP_reductoisomerase_C"/>
</dbReference>
<dbReference type="InterPro" id="IPR013512">
    <property type="entry name" value="DXP_reductoisomerase_N"/>
</dbReference>
<dbReference type="InterPro" id="IPR026877">
    <property type="entry name" value="DXPR_C"/>
</dbReference>
<dbReference type="InterPro" id="IPR036169">
    <property type="entry name" value="DXPR_C_sf"/>
</dbReference>
<dbReference type="InterPro" id="IPR036291">
    <property type="entry name" value="NAD(P)-bd_dom_sf"/>
</dbReference>
<dbReference type="NCBIfam" id="TIGR00243">
    <property type="entry name" value="Dxr"/>
    <property type="match status" value="1"/>
</dbReference>
<dbReference type="PANTHER" id="PTHR30525">
    <property type="entry name" value="1-DEOXY-D-XYLULOSE 5-PHOSPHATE REDUCTOISOMERASE"/>
    <property type="match status" value="1"/>
</dbReference>
<dbReference type="PANTHER" id="PTHR30525:SF0">
    <property type="entry name" value="1-DEOXY-D-XYLULOSE 5-PHOSPHATE REDUCTOISOMERASE, CHLOROPLASTIC"/>
    <property type="match status" value="1"/>
</dbReference>
<dbReference type="Pfam" id="PF08436">
    <property type="entry name" value="DXP_redisom_C"/>
    <property type="match status" value="1"/>
</dbReference>
<dbReference type="Pfam" id="PF02670">
    <property type="entry name" value="DXP_reductoisom"/>
    <property type="match status" value="1"/>
</dbReference>
<dbReference type="Pfam" id="PF13288">
    <property type="entry name" value="DXPR_C"/>
    <property type="match status" value="1"/>
</dbReference>
<dbReference type="PIRSF" id="PIRSF006205">
    <property type="entry name" value="Dxp_reductismrs"/>
    <property type="match status" value="1"/>
</dbReference>
<dbReference type="SUPFAM" id="SSF69055">
    <property type="entry name" value="1-deoxy-D-xylulose-5-phosphate reductoisomerase, C-terminal domain"/>
    <property type="match status" value="1"/>
</dbReference>
<dbReference type="SUPFAM" id="SSF55347">
    <property type="entry name" value="Glyceraldehyde-3-phosphate dehydrogenase-like, C-terminal domain"/>
    <property type="match status" value="1"/>
</dbReference>
<dbReference type="SUPFAM" id="SSF51735">
    <property type="entry name" value="NAD(P)-binding Rossmann-fold domains"/>
    <property type="match status" value="1"/>
</dbReference>